<accession>B7M7U8</accession>
<organism>
    <name type="scientific">Escherichia coli O8 (strain IAI1)</name>
    <dbReference type="NCBI Taxonomy" id="585034"/>
    <lineage>
        <taxon>Bacteria</taxon>
        <taxon>Pseudomonadati</taxon>
        <taxon>Pseudomonadota</taxon>
        <taxon>Gammaproteobacteria</taxon>
        <taxon>Enterobacterales</taxon>
        <taxon>Enterobacteriaceae</taxon>
        <taxon>Escherichia</taxon>
    </lineage>
</organism>
<protein>
    <recommendedName>
        <fullName evidence="1">Maltoporin</fullName>
    </recommendedName>
    <alternativeName>
        <fullName evidence="1">Maltose-inducible porin</fullName>
    </alternativeName>
</protein>
<feature type="signal peptide" evidence="1">
    <location>
        <begin position="1"/>
        <end position="25"/>
    </location>
</feature>
<feature type="chain" id="PRO_1000140483" description="Maltoporin">
    <location>
        <begin position="26"/>
        <end position="446"/>
    </location>
</feature>
<feature type="site" description="Greasy slide, important in sugar transport" evidence="1">
    <location>
        <position position="31"/>
    </location>
</feature>
<feature type="site" description="Greasy slide, important in sugar transport" evidence="1">
    <location>
        <position position="66"/>
    </location>
</feature>
<feature type="site" description="Greasy slide, important in sugar transport" evidence="1">
    <location>
        <position position="99"/>
    </location>
</feature>
<feature type="site" description="Important in sugar transport" evidence="1">
    <location>
        <position position="143"/>
    </location>
</feature>
<feature type="site" description="Greasy slide, important in sugar transport" evidence="1">
    <location>
        <position position="252"/>
    </location>
</feature>
<feature type="site" description="Greasy slide, important in sugar transport" evidence="1">
    <location>
        <position position="383"/>
    </location>
</feature>
<feature type="site" description="Greasy slide, important in sugar transport" evidence="1">
    <location>
        <position position="445"/>
    </location>
</feature>
<gene>
    <name evidence="1" type="primary">lamB</name>
    <name type="ordered locus">ECIAI1_4265</name>
</gene>
<comment type="function">
    <text evidence="1">Involved in the transport of maltose and maltodextrins.</text>
</comment>
<comment type="catalytic activity">
    <reaction evidence="1">
        <text>beta-maltose(in) = beta-maltose(out)</text>
        <dbReference type="Rhea" id="RHEA:29731"/>
        <dbReference type="ChEBI" id="CHEBI:18147"/>
    </reaction>
</comment>
<comment type="subunit">
    <text evidence="1">Homotrimer formed of three 18-stranded antiparallel beta-barrels, containing three independent channels.</text>
</comment>
<comment type="subcellular location">
    <subcellularLocation>
        <location evidence="1">Cell outer membrane</location>
        <topology evidence="1">Multi-pass membrane protein</topology>
    </subcellularLocation>
</comment>
<comment type="induction">
    <text evidence="1">By maltose.</text>
</comment>
<comment type="similarity">
    <text evidence="1">Belongs to the porin LamB (TC 1.B.3) family.</text>
</comment>
<sequence>MMITLRKLPLAVAVAAGVMSAQAMAVDFHGYARSGIGWTGSGGEQQCFQTTGAQSKYRLGNECETYAELKLGQEVWKEGDKSFYFDTNVAYSVAQQNDWEATDPAFREANVQGKNLIEWLPGSTIWAGKRFYQRHDVHMIDFYYWDISGPGAGLENIDVGFGKLSLAATRSSEAGGSSSFASNNIYDYTNETANDVFDVRLAQMEINPGGTLELGVDYGRANLRDNYRLVDGASKDGWLFTAEHTQSVLKGFNKFVVQYATDSMTSQGKGLSQGSGVAFDNEKFAYNINNNGHMLRILDHGAISMGDNWDMMYVGMYQDINWDNDNGTKWWTVGIRPMYKWTPIMSTVMEIGYDNVESQRTGDKNNQYKITLAQQWQAGDSIWSRPAIRVFATYAKWDEKWGYDYNGDSKVNPNYGKAVPADFNGGSFGRGDSDEWTFGAQMEIWW</sequence>
<keyword id="KW-0998">Cell outer membrane</keyword>
<keyword id="KW-0406">Ion transport</keyword>
<keyword id="KW-0472">Membrane</keyword>
<keyword id="KW-0626">Porin</keyword>
<keyword id="KW-0732">Signal</keyword>
<keyword id="KW-0762">Sugar transport</keyword>
<keyword id="KW-0812">Transmembrane</keyword>
<keyword id="KW-1134">Transmembrane beta strand</keyword>
<keyword id="KW-0813">Transport</keyword>
<reference key="1">
    <citation type="journal article" date="2009" name="PLoS Genet.">
        <title>Organised genome dynamics in the Escherichia coli species results in highly diverse adaptive paths.</title>
        <authorList>
            <person name="Touchon M."/>
            <person name="Hoede C."/>
            <person name="Tenaillon O."/>
            <person name="Barbe V."/>
            <person name="Baeriswyl S."/>
            <person name="Bidet P."/>
            <person name="Bingen E."/>
            <person name="Bonacorsi S."/>
            <person name="Bouchier C."/>
            <person name="Bouvet O."/>
            <person name="Calteau A."/>
            <person name="Chiapello H."/>
            <person name="Clermont O."/>
            <person name="Cruveiller S."/>
            <person name="Danchin A."/>
            <person name="Diard M."/>
            <person name="Dossat C."/>
            <person name="Karoui M.E."/>
            <person name="Frapy E."/>
            <person name="Garry L."/>
            <person name="Ghigo J.M."/>
            <person name="Gilles A.M."/>
            <person name="Johnson J."/>
            <person name="Le Bouguenec C."/>
            <person name="Lescat M."/>
            <person name="Mangenot S."/>
            <person name="Martinez-Jehanne V."/>
            <person name="Matic I."/>
            <person name="Nassif X."/>
            <person name="Oztas S."/>
            <person name="Petit M.A."/>
            <person name="Pichon C."/>
            <person name="Rouy Z."/>
            <person name="Ruf C.S."/>
            <person name="Schneider D."/>
            <person name="Tourret J."/>
            <person name="Vacherie B."/>
            <person name="Vallenet D."/>
            <person name="Medigue C."/>
            <person name="Rocha E.P.C."/>
            <person name="Denamur E."/>
        </authorList>
    </citation>
    <scope>NUCLEOTIDE SEQUENCE [LARGE SCALE GENOMIC DNA]</scope>
    <source>
        <strain>IAI1</strain>
    </source>
</reference>
<evidence type="ECO:0000255" key="1">
    <source>
        <dbReference type="HAMAP-Rule" id="MF_01301"/>
    </source>
</evidence>
<name>LAMB_ECO8A</name>
<proteinExistence type="inferred from homology"/>
<dbReference type="EMBL" id="CU928160">
    <property type="protein sequence ID" value="CAR01014.1"/>
    <property type="molecule type" value="Genomic_DNA"/>
</dbReference>
<dbReference type="RefSeq" id="WP_000973658.1">
    <property type="nucleotide sequence ID" value="NC_011741.1"/>
</dbReference>
<dbReference type="SMR" id="B7M7U8"/>
<dbReference type="GeneID" id="93777799"/>
<dbReference type="KEGG" id="ecr:ECIAI1_4265"/>
<dbReference type="HOGENOM" id="CLU_032473_4_1_6"/>
<dbReference type="GO" id="GO:0009279">
    <property type="term" value="C:cell outer membrane"/>
    <property type="evidence" value="ECO:0007669"/>
    <property type="project" value="UniProtKB-SubCell"/>
</dbReference>
<dbReference type="GO" id="GO:0046930">
    <property type="term" value="C:pore complex"/>
    <property type="evidence" value="ECO:0007669"/>
    <property type="project" value="UniProtKB-KW"/>
</dbReference>
<dbReference type="GO" id="GO:0042958">
    <property type="term" value="F:maltodextrin transmembrane transporter activity"/>
    <property type="evidence" value="ECO:0007669"/>
    <property type="project" value="InterPro"/>
</dbReference>
<dbReference type="GO" id="GO:0015481">
    <property type="term" value="F:maltose transporting porin activity"/>
    <property type="evidence" value="ECO:0007669"/>
    <property type="project" value="InterPro"/>
</dbReference>
<dbReference type="GO" id="GO:0006811">
    <property type="term" value="P:monoatomic ion transport"/>
    <property type="evidence" value="ECO:0007669"/>
    <property type="project" value="UniProtKB-KW"/>
</dbReference>
<dbReference type="CDD" id="cd01346">
    <property type="entry name" value="Maltoporin-like"/>
    <property type="match status" value="1"/>
</dbReference>
<dbReference type="FunFam" id="2.40.170.10:FF:000001">
    <property type="entry name" value="Maltoporin"/>
    <property type="match status" value="1"/>
</dbReference>
<dbReference type="Gene3D" id="2.40.170.10">
    <property type="entry name" value="Porin, LamB type"/>
    <property type="match status" value="1"/>
</dbReference>
<dbReference type="HAMAP" id="MF_01301">
    <property type="entry name" value="LamB"/>
    <property type="match status" value="1"/>
</dbReference>
<dbReference type="InterPro" id="IPR050286">
    <property type="entry name" value="G_neg_Bact_CarbUptk_Porin"/>
</dbReference>
<dbReference type="InterPro" id="IPR023738">
    <property type="entry name" value="Maltoporin"/>
</dbReference>
<dbReference type="InterPro" id="IPR003192">
    <property type="entry name" value="Porin_LamB"/>
</dbReference>
<dbReference type="InterPro" id="IPR036998">
    <property type="entry name" value="Porin_LamB_sf"/>
</dbReference>
<dbReference type="NCBIfam" id="NF006860">
    <property type="entry name" value="PRK09360.1"/>
    <property type="match status" value="1"/>
</dbReference>
<dbReference type="PANTHER" id="PTHR38762">
    <property type="entry name" value="CRYPTIC OUTER MEMBRANE PORIN BGLH-RELATED"/>
    <property type="match status" value="1"/>
</dbReference>
<dbReference type="PANTHER" id="PTHR38762:SF1">
    <property type="entry name" value="CRYPTIC OUTER MEMBRANE PORIN BGLH-RELATED"/>
    <property type="match status" value="1"/>
</dbReference>
<dbReference type="Pfam" id="PF02264">
    <property type="entry name" value="LamB"/>
    <property type="match status" value="1"/>
</dbReference>
<dbReference type="SUPFAM" id="SSF56935">
    <property type="entry name" value="Porins"/>
    <property type="match status" value="1"/>
</dbReference>